<feature type="chain" id="PRO_1000205376" description="Small ribosomal subunit protein bS21">
    <location>
        <begin position="1"/>
        <end position="66"/>
    </location>
</feature>
<protein>
    <recommendedName>
        <fullName evidence="1">Small ribosomal subunit protein bS21</fullName>
    </recommendedName>
    <alternativeName>
        <fullName evidence="2">30S ribosomal protein S21</fullName>
    </alternativeName>
</protein>
<keyword id="KW-0687">Ribonucleoprotein</keyword>
<keyword id="KW-0689">Ribosomal protein</keyword>
<reference key="1">
    <citation type="journal article" date="2009" name="PLoS ONE">
        <title>Genome sequence of the endosymbiont Rickettsia peacockii and comparison with virulent Rickettsia rickettsii: identification of virulence factors.</title>
        <authorList>
            <person name="Felsheim R.F."/>
            <person name="Kurtti T.J."/>
            <person name="Munderloh U.G."/>
        </authorList>
    </citation>
    <scope>NUCLEOTIDE SEQUENCE [LARGE SCALE GENOMIC DNA]</scope>
    <source>
        <strain>Rustic</strain>
    </source>
</reference>
<name>RS21_RICPU</name>
<proteinExistence type="inferred from homology"/>
<sequence>MILVNVHAGNCDNTLKNFKKKLQRELYFRKMKEQRYYETPSAKRVRKAQEAARRQRKFARKKMFDE</sequence>
<comment type="similarity">
    <text evidence="1">Belongs to the bacterial ribosomal protein bS21 family.</text>
</comment>
<accession>C4K2S8</accession>
<dbReference type="EMBL" id="CP001227">
    <property type="protein sequence ID" value="ACR47873.1"/>
    <property type="molecule type" value="Genomic_DNA"/>
</dbReference>
<dbReference type="RefSeq" id="WP_012148483.1">
    <property type="nucleotide sequence ID" value="NC_012730.1"/>
</dbReference>
<dbReference type="SMR" id="C4K2S8"/>
<dbReference type="GeneID" id="79937617"/>
<dbReference type="KEGG" id="rpk:RPR_07150"/>
<dbReference type="HOGENOM" id="CLU_159258_0_2_5"/>
<dbReference type="Proteomes" id="UP000005015">
    <property type="component" value="Chromosome"/>
</dbReference>
<dbReference type="GO" id="GO:1990904">
    <property type="term" value="C:ribonucleoprotein complex"/>
    <property type="evidence" value="ECO:0007669"/>
    <property type="project" value="UniProtKB-KW"/>
</dbReference>
<dbReference type="GO" id="GO:0005840">
    <property type="term" value="C:ribosome"/>
    <property type="evidence" value="ECO:0007669"/>
    <property type="project" value="UniProtKB-KW"/>
</dbReference>
<dbReference type="GO" id="GO:0003735">
    <property type="term" value="F:structural constituent of ribosome"/>
    <property type="evidence" value="ECO:0007669"/>
    <property type="project" value="InterPro"/>
</dbReference>
<dbReference type="GO" id="GO:0006412">
    <property type="term" value="P:translation"/>
    <property type="evidence" value="ECO:0007669"/>
    <property type="project" value="UniProtKB-UniRule"/>
</dbReference>
<dbReference type="Gene3D" id="1.20.5.1150">
    <property type="entry name" value="Ribosomal protein S8"/>
    <property type="match status" value="1"/>
</dbReference>
<dbReference type="HAMAP" id="MF_00358">
    <property type="entry name" value="Ribosomal_bS21"/>
    <property type="match status" value="1"/>
</dbReference>
<dbReference type="InterPro" id="IPR001911">
    <property type="entry name" value="Ribosomal_bS21"/>
</dbReference>
<dbReference type="InterPro" id="IPR038380">
    <property type="entry name" value="Ribosomal_bS21_sf"/>
</dbReference>
<dbReference type="NCBIfam" id="TIGR00030">
    <property type="entry name" value="S21p"/>
    <property type="match status" value="1"/>
</dbReference>
<dbReference type="Pfam" id="PF01165">
    <property type="entry name" value="Ribosomal_S21"/>
    <property type="match status" value="1"/>
</dbReference>
<gene>
    <name evidence="1" type="primary">rpsU</name>
    <name type="ordered locus">RPR_07150</name>
</gene>
<evidence type="ECO:0000255" key="1">
    <source>
        <dbReference type="HAMAP-Rule" id="MF_00358"/>
    </source>
</evidence>
<evidence type="ECO:0000305" key="2"/>
<organism>
    <name type="scientific">Rickettsia peacockii (strain Rustic)</name>
    <dbReference type="NCBI Taxonomy" id="562019"/>
    <lineage>
        <taxon>Bacteria</taxon>
        <taxon>Pseudomonadati</taxon>
        <taxon>Pseudomonadota</taxon>
        <taxon>Alphaproteobacteria</taxon>
        <taxon>Rickettsiales</taxon>
        <taxon>Rickettsiaceae</taxon>
        <taxon>Rickettsieae</taxon>
        <taxon>Rickettsia</taxon>
        <taxon>spotted fever group</taxon>
    </lineage>
</organism>